<name>RS2_MOOTA</name>
<protein>
    <recommendedName>
        <fullName evidence="1">Small ribosomal subunit protein uS2</fullName>
    </recommendedName>
    <alternativeName>
        <fullName evidence="2">30S ribosomal protein S2</fullName>
    </alternativeName>
</protein>
<keyword id="KW-0687">Ribonucleoprotein</keyword>
<keyword id="KW-0689">Ribosomal protein</keyword>
<dbReference type="EMBL" id="CP000232">
    <property type="protein sequence ID" value="ABC19346.1"/>
    <property type="molecule type" value="Genomic_DNA"/>
</dbReference>
<dbReference type="RefSeq" id="YP_429889.1">
    <property type="nucleotide sequence ID" value="NC_007644.1"/>
</dbReference>
<dbReference type="SMR" id="Q2RJP3"/>
<dbReference type="STRING" id="264732.Moth_1032"/>
<dbReference type="EnsemblBacteria" id="ABC19346">
    <property type="protein sequence ID" value="ABC19346"/>
    <property type="gene ID" value="Moth_1032"/>
</dbReference>
<dbReference type="KEGG" id="mta:Moth_1032"/>
<dbReference type="PATRIC" id="fig|264732.11.peg.1112"/>
<dbReference type="eggNOG" id="COG0052">
    <property type="taxonomic scope" value="Bacteria"/>
</dbReference>
<dbReference type="HOGENOM" id="CLU_040318_1_2_9"/>
<dbReference type="OrthoDB" id="9808036at2"/>
<dbReference type="GO" id="GO:0022627">
    <property type="term" value="C:cytosolic small ribosomal subunit"/>
    <property type="evidence" value="ECO:0007669"/>
    <property type="project" value="TreeGrafter"/>
</dbReference>
<dbReference type="GO" id="GO:0003735">
    <property type="term" value="F:structural constituent of ribosome"/>
    <property type="evidence" value="ECO:0007669"/>
    <property type="project" value="InterPro"/>
</dbReference>
<dbReference type="GO" id="GO:0006412">
    <property type="term" value="P:translation"/>
    <property type="evidence" value="ECO:0007669"/>
    <property type="project" value="UniProtKB-UniRule"/>
</dbReference>
<dbReference type="CDD" id="cd01425">
    <property type="entry name" value="RPS2"/>
    <property type="match status" value="1"/>
</dbReference>
<dbReference type="FunFam" id="1.10.287.610:FF:000001">
    <property type="entry name" value="30S ribosomal protein S2"/>
    <property type="match status" value="1"/>
</dbReference>
<dbReference type="Gene3D" id="3.40.50.10490">
    <property type="entry name" value="Glucose-6-phosphate isomerase like protein, domain 1"/>
    <property type="match status" value="1"/>
</dbReference>
<dbReference type="Gene3D" id="1.10.287.610">
    <property type="entry name" value="Helix hairpin bin"/>
    <property type="match status" value="1"/>
</dbReference>
<dbReference type="HAMAP" id="MF_00291_B">
    <property type="entry name" value="Ribosomal_uS2_B"/>
    <property type="match status" value="1"/>
</dbReference>
<dbReference type="InterPro" id="IPR001865">
    <property type="entry name" value="Ribosomal_uS2"/>
</dbReference>
<dbReference type="InterPro" id="IPR005706">
    <property type="entry name" value="Ribosomal_uS2_bac/mit/plastid"/>
</dbReference>
<dbReference type="InterPro" id="IPR018130">
    <property type="entry name" value="Ribosomal_uS2_CS"/>
</dbReference>
<dbReference type="InterPro" id="IPR023591">
    <property type="entry name" value="Ribosomal_uS2_flav_dom_sf"/>
</dbReference>
<dbReference type="NCBIfam" id="TIGR01011">
    <property type="entry name" value="rpsB_bact"/>
    <property type="match status" value="1"/>
</dbReference>
<dbReference type="PANTHER" id="PTHR12534">
    <property type="entry name" value="30S RIBOSOMAL PROTEIN S2 PROKARYOTIC AND ORGANELLAR"/>
    <property type="match status" value="1"/>
</dbReference>
<dbReference type="PANTHER" id="PTHR12534:SF0">
    <property type="entry name" value="SMALL RIBOSOMAL SUBUNIT PROTEIN US2M"/>
    <property type="match status" value="1"/>
</dbReference>
<dbReference type="Pfam" id="PF00318">
    <property type="entry name" value="Ribosomal_S2"/>
    <property type="match status" value="1"/>
</dbReference>
<dbReference type="PRINTS" id="PR00395">
    <property type="entry name" value="RIBOSOMALS2"/>
</dbReference>
<dbReference type="SUPFAM" id="SSF52313">
    <property type="entry name" value="Ribosomal protein S2"/>
    <property type="match status" value="1"/>
</dbReference>
<dbReference type="PROSITE" id="PS00962">
    <property type="entry name" value="RIBOSOMAL_S2_1"/>
    <property type="match status" value="1"/>
</dbReference>
<dbReference type="PROSITE" id="PS00963">
    <property type="entry name" value="RIBOSOMAL_S2_2"/>
    <property type="match status" value="1"/>
</dbReference>
<evidence type="ECO:0000255" key="1">
    <source>
        <dbReference type="HAMAP-Rule" id="MF_00291"/>
    </source>
</evidence>
<evidence type="ECO:0000305" key="2"/>
<reference key="1">
    <citation type="journal article" date="2008" name="Environ. Microbiol.">
        <title>The complete genome sequence of Moorella thermoacetica (f. Clostridium thermoaceticum).</title>
        <authorList>
            <person name="Pierce E."/>
            <person name="Xie G."/>
            <person name="Barabote R.D."/>
            <person name="Saunders E."/>
            <person name="Han C.S."/>
            <person name="Detter J.C."/>
            <person name="Richardson P."/>
            <person name="Brettin T.S."/>
            <person name="Das A."/>
            <person name="Ljungdahl L.G."/>
            <person name="Ragsdale S.W."/>
        </authorList>
    </citation>
    <scope>NUCLEOTIDE SEQUENCE [LARGE SCALE GENOMIC DNA]</scope>
    <source>
        <strain>ATCC 39073 / JCM 9320</strain>
    </source>
</reference>
<proteinExistence type="inferred from homology"/>
<sequence length="238" mass="27328">MAIISMKQLLEAGVHFGHQTRRWNPKMAPYIFTERNGIYIIDLQRTVKKIEEAYNFIRDLSRDGGKVLFVGTKKQAQESVKEEAERCGMFYVNVRWLGGTLTNFQTIRRRIERLKELERMEEEGTFDLLPKKEVAHLRGEREKLERFLGGIKEMKSLPDALFIIDPRKERIAVAEGRRLGIPIVAIVDTNCDPDEIDYVIPGNDDAIRAVRLLTSKMADAVIEGQQGQDQPEEEAVVE</sequence>
<feature type="chain" id="PRO_1000003999" description="Small ribosomal subunit protein uS2">
    <location>
        <begin position="1"/>
        <end position="238"/>
    </location>
</feature>
<gene>
    <name evidence="1" type="primary">rpsB</name>
    <name type="ordered locus">Moth_1032</name>
</gene>
<organism>
    <name type="scientific">Moorella thermoacetica (strain ATCC 39073 / JCM 9320)</name>
    <dbReference type="NCBI Taxonomy" id="264732"/>
    <lineage>
        <taxon>Bacteria</taxon>
        <taxon>Bacillati</taxon>
        <taxon>Bacillota</taxon>
        <taxon>Clostridia</taxon>
        <taxon>Moorellales</taxon>
        <taxon>Moorellaceae</taxon>
        <taxon>Moorella</taxon>
    </lineage>
</organism>
<comment type="similarity">
    <text evidence="1">Belongs to the universal ribosomal protein uS2 family.</text>
</comment>
<accession>Q2RJP3</accession>